<protein>
    <recommendedName>
        <fullName evidence="1">Large ribosomal subunit protein uL14c</fullName>
    </recommendedName>
    <alternativeName>
        <fullName evidence="2">50S ribosomal protein L14, chloroplastic</fullName>
    </alternativeName>
</protein>
<organism>
    <name type="scientific">Citrus sinensis</name>
    <name type="common">Sweet orange</name>
    <name type="synonym">Citrus aurantium var. sinensis</name>
    <dbReference type="NCBI Taxonomy" id="2711"/>
    <lineage>
        <taxon>Eukaryota</taxon>
        <taxon>Viridiplantae</taxon>
        <taxon>Streptophyta</taxon>
        <taxon>Embryophyta</taxon>
        <taxon>Tracheophyta</taxon>
        <taxon>Spermatophyta</taxon>
        <taxon>Magnoliopsida</taxon>
        <taxon>eudicotyledons</taxon>
        <taxon>Gunneridae</taxon>
        <taxon>Pentapetalae</taxon>
        <taxon>rosids</taxon>
        <taxon>malvids</taxon>
        <taxon>Sapindales</taxon>
        <taxon>Rutaceae</taxon>
        <taxon>Aurantioideae</taxon>
        <taxon>Citrus</taxon>
    </lineage>
</organism>
<accession>Q09ME1</accession>
<reference key="1">
    <citation type="journal article" date="2006" name="BMC Plant Biol.">
        <title>The complete chloroplast genome sequence of Citrus sinensis (L.) Osbeck var 'Ridge Pineapple': organization and phylogenetic relationships to other angiosperms.</title>
        <authorList>
            <person name="Bausher M.G."/>
            <person name="Singh N.D."/>
            <person name="Lee S.-B."/>
            <person name="Jansen R.K."/>
            <person name="Daniell H."/>
        </authorList>
    </citation>
    <scope>NUCLEOTIDE SEQUENCE [LARGE SCALE GENOMIC DNA]</scope>
    <source>
        <strain>cv. Osbeck var. Ridge Pineapple</strain>
    </source>
</reference>
<feature type="chain" id="PRO_0000276339" description="Large ribosomal subunit protein uL14c">
    <location>
        <begin position="1"/>
        <end position="122"/>
    </location>
</feature>
<sequence>MIQPQTHLNVADNSGARELMCIRIIGASNRRYAHIGDVIVAVIKEAVPNTPLERSEVIRAVIVRTCKELRRDNGMIIRYDDNAAVVIDHEGNPKGTRVFGAIARELRQLNFTKIVSLAPEVL</sequence>
<geneLocation type="chloroplast"/>
<proteinExistence type="inferred from homology"/>
<gene>
    <name evidence="1" type="primary">rpl14</name>
</gene>
<dbReference type="EMBL" id="DQ864733">
    <property type="protein sequence ID" value="ABI49055.1"/>
    <property type="molecule type" value="Genomic_DNA"/>
</dbReference>
<dbReference type="RefSeq" id="YP_740512.1">
    <property type="nucleotide sequence ID" value="NC_008334.1"/>
</dbReference>
<dbReference type="SMR" id="Q09ME1"/>
<dbReference type="GeneID" id="4271188"/>
<dbReference type="KEGG" id="cit:4271188"/>
<dbReference type="OrthoDB" id="846899at71240"/>
<dbReference type="GO" id="GO:0009507">
    <property type="term" value="C:chloroplast"/>
    <property type="evidence" value="ECO:0007669"/>
    <property type="project" value="UniProtKB-SubCell"/>
</dbReference>
<dbReference type="GO" id="GO:0015934">
    <property type="term" value="C:large ribosomal subunit"/>
    <property type="evidence" value="ECO:0007669"/>
    <property type="project" value="InterPro"/>
</dbReference>
<dbReference type="GO" id="GO:0019843">
    <property type="term" value="F:rRNA binding"/>
    <property type="evidence" value="ECO:0007669"/>
    <property type="project" value="UniProtKB-UniRule"/>
</dbReference>
<dbReference type="GO" id="GO:0003735">
    <property type="term" value="F:structural constituent of ribosome"/>
    <property type="evidence" value="ECO:0007669"/>
    <property type="project" value="InterPro"/>
</dbReference>
<dbReference type="GO" id="GO:0006412">
    <property type="term" value="P:translation"/>
    <property type="evidence" value="ECO:0007669"/>
    <property type="project" value="UniProtKB-UniRule"/>
</dbReference>
<dbReference type="CDD" id="cd00337">
    <property type="entry name" value="Ribosomal_uL14"/>
    <property type="match status" value="1"/>
</dbReference>
<dbReference type="FunFam" id="2.40.150.20:FF:000002">
    <property type="entry name" value="50S ribosomal protein L14, chloroplastic"/>
    <property type="match status" value="1"/>
</dbReference>
<dbReference type="Gene3D" id="2.40.150.20">
    <property type="entry name" value="Ribosomal protein L14"/>
    <property type="match status" value="1"/>
</dbReference>
<dbReference type="HAMAP" id="MF_01367">
    <property type="entry name" value="Ribosomal_uL14"/>
    <property type="match status" value="1"/>
</dbReference>
<dbReference type="InterPro" id="IPR000218">
    <property type="entry name" value="Ribosomal_uL14"/>
</dbReference>
<dbReference type="InterPro" id="IPR005745">
    <property type="entry name" value="Ribosomal_uL14_bac-type"/>
</dbReference>
<dbReference type="InterPro" id="IPR019972">
    <property type="entry name" value="Ribosomal_uL14_CS"/>
</dbReference>
<dbReference type="InterPro" id="IPR036853">
    <property type="entry name" value="Ribosomal_uL14_sf"/>
</dbReference>
<dbReference type="NCBIfam" id="TIGR01067">
    <property type="entry name" value="rplN_bact"/>
    <property type="match status" value="1"/>
</dbReference>
<dbReference type="PANTHER" id="PTHR11761">
    <property type="entry name" value="50S/60S RIBOSOMAL PROTEIN L14/L23"/>
    <property type="match status" value="1"/>
</dbReference>
<dbReference type="PANTHER" id="PTHR11761:SF3">
    <property type="entry name" value="LARGE RIBOSOMAL SUBUNIT PROTEIN UL14M"/>
    <property type="match status" value="1"/>
</dbReference>
<dbReference type="Pfam" id="PF00238">
    <property type="entry name" value="Ribosomal_L14"/>
    <property type="match status" value="1"/>
</dbReference>
<dbReference type="SMART" id="SM01374">
    <property type="entry name" value="Ribosomal_L14"/>
    <property type="match status" value="1"/>
</dbReference>
<dbReference type="SUPFAM" id="SSF50193">
    <property type="entry name" value="Ribosomal protein L14"/>
    <property type="match status" value="1"/>
</dbReference>
<dbReference type="PROSITE" id="PS00049">
    <property type="entry name" value="RIBOSOMAL_L14"/>
    <property type="match status" value="1"/>
</dbReference>
<comment type="function">
    <text evidence="1">Binds to 23S rRNA.</text>
</comment>
<comment type="subunit">
    <text evidence="1">Part of the 50S ribosomal subunit.</text>
</comment>
<comment type="subcellular location">
    <subcellularLocation>
        <location>Plastid</location>
        <location>Chloroplast</location>
    </subcellularLocation>
</comment>
<comment type="similarity">
    <text evidence="1">Belongs to the universal ribosomal protein uL14 family.</text>
</comment>
<evidence type="ECO:0000255" key="1">
    <source>
        <dbReference type="HAMAP-Rule" id="MF_01367"/>
    </source>
</evidence>
<evidence type="ECO:0000305" key="2"/>
<name>RK14_CITSI</name>
<keyword id="KW-0150">Chloroplast</keyword>
<keyword id="KW-0934">Plastid</keyword>
<keyword id="KW-0687">Ribonucleoprotein</keyword>
<keyword id="KW-0689">Ribosomal protein</keyword>
<keyword id="KW-0694">RNA-binding</keyword>
<keyword id="KW-0699">rRNA-binding</keyword>